<keyword id="KW-0963">Cytoplasm</keyword>
<keyword id="KW-0489">Methyltransferase</keyword>
<keyword id="KW-0949">S-adenosyl-L-methionine</keyword>
<keyword id="KW-0808">Transferase</keyword>
<keyword id="KW-0819">tRNA processing</keyword>
<reference key="1">
    <citation type="journal article" date="2009" name="Appl. Environ. Microbiol.">
        <title>Novel features of the polysaccharide-digesting gliding bacterium Flavobacterium johnsoniae as revealed by genome sequence analysis.</title>
        <authorList>
            <person name="McBride M.J."/>
            <person name="Xie G."/>
            <person name="Martens E.C."/>
            <person name="Lapidus A."/>
            <person name="Henrissat B."/>
            <person name="Rhodes R.G."/>
            <person name="Goltsman E."/>
            <person name="Wang W."/>
            <person name="Xu J."/>
            <person name="Hunnicutt D.W."/>
            <person name="Staroscik A.M."/>
            <person name="Hoover T.R."/>
            <person name="Cheng Y.Q."/>
            <person name="Stein J.L."/>
        </authorList>
    </citation>
    <scope>NUCLEOTIDE SEQUENCE [LARGE SCALE GENOMIC DNA]</scope>
    <source>
        <strain>ATCC 17061 / DSM 2064 / JCM 8514 / BCRC 14874 / CCUG 350202 / NBRC 14942 / NCIMB 11054 / UW101</strain>
    </source>
</reference>
<gene>
    <name type="ordered locus">Fjoh_1299</name>
</gene>
<organism>
    <name type="scientific">Flavobacterium johnsoniae (strain ATCC 17061 / DSM 2064 / JCM 8514 / BCRC 14874 / CCUG 350202 / NBRC 14942 / NCIMB 11054 / UW101)</name>
    <name type="common">Cytophaga johnsonae</name>
    <dbReference type="NCBI Taxonomy" id="376686"/>
    <lineage>
        <taxon>Bacteria</taxon>
        <taxon>Pseudomonadati</taxon>
        <taxon>Bacteroidota</taxon>
        <taxon>Flavobacteriia</taxon>
        <taxon>Flavobacteriales</taxon>
        <taxon>Flavobacteriaceae</taxon>
        <taxon>Flavobacterium</taxon>
    </lineage>
</organism>
<proteinExistence type="inferred from homology"/>
<evidence type="ECO:0000255" key="1">
    <source>
        <dbReference type="HAMAP-Rule" id="MF_01872"/>
    </source>
</evidence>
<comment type="function">
    <text evidence="1">Specifically methylates the adenine in position 37 of tRNA(1)(Val) (anticodon cmo5UAC).</text>
</comment>
<comment type="catalytic activity">
    <reaction evidence="1">
        <text>adenosine(37) in tRNA1(Val) + S-adenosyl-L-methionine = N(6)-methyladenosine(37) in tRNA1(Val) + S-adenosyl-L-homocysteine + H(+)</text>
        <dbReference type="Rhea" id="RHEA:43160"/>
        <dbReference type="Rhea" id="RHEA-COMP:10369"/>
        <dbReference type="Rhea" id="RHEA-COMP:10370"/>
        <dbReference type="ChEBI" id="CHEBI:15378"/>
        <dbReference type="ChEBI" id="CHEBI:57856"/>
        <dbReference type="ChEBI" id="CHEBI:59789"/>
        <dbReference type="ChEBI" id="CHEBI:74411"/>
        <dbReference type="ChEBI" id="CHEBI:74449"/>
        <dbReference type="EC" id="2.1.1.223"/>
    </reaction>
</comment>
<comment type="subcellular location">
    <subcellularLocation>
        <location evidence="1">Cytoplasm</location>
    </subcellularLocation>
</comment>
<comment type="similarity">
    <text evidence="1">Belongs to the methyltransferase superfamily. tRNA (adenine-N(6)-)-methyltransferase family.</text>
</comment>
<name>TRMN6_FLAJ1</name>
<feature type="chain" id="PRO_0000387380" description="tRNA1(Val) (adenine(37)-N6)-methyltransferase">
    <location>
        <begin position="1"/>
        <end position="235"/>
    </location>
</feature>
<dbReference type="EC" id="2.1.1.223" evidence="1"/>
<dbReference type="EMBL" id="CP000685">
    <property type="protein sequence ID" value="ABQ04331.1"/>
    <property type="molecule type" value="Genomic_DNA"/>
</dbReference>
<dbReference type="RefSeq" id="WP_012023380.1">
    <property type="nucleotide sequence ID" value="NC_009441.1"/>
</dbReference>
<dbReference type="SMR" id="A5FKD7"/>
<dbReference type="STRING" id="376686.Fjoh_1299"/>
<dbReference type="KEGG" id="fjo:Fjoh_1299"/>
<dbReference type="eggNOG" id="COG4123">
    <property type="taxonomic scope" value="Bacteria"/>
</dbReference>
<dbReference type="HOGENOM" id="CLU_061983_0_0_10"/>
<dbReference type="OrthoDB" id="5383291at2"/>
<dbReference type="Proteomes" id="UP000006694">
    <property type="component" value="Chromosome"/>
</dbReference>
<dbReference type="GO" id="GO:0005737">
    <property type="term" value="C:cytoplasm"/>
    <property type="evidence" value="ECO:0007669"/>
    <property type="project" value="UniProtKB-SubCell"/>
</dbReference>
<dbReference type="GO" id="GO:0003676">
    <property type="term" value="F:nucleic acid binding"/>
    <property type="evidence" value="ECO:0007669"/>
    <property type="project" value="InterPro"/>
</dbReference>
<dbReference type="GO" id="GO:0016430">
    <property type="term" value="F:tRNA (adenine-N6)-methyltransferase activity"/>
    <property type="evidence" value="ECO:0007669"/>
    <property type="project" value="UniProtKB-UniRule"/>
</dbReference>
<dbReference type="GO" id="GO:0032259">
    <property type="term" value="P:methylation"/>
    <property type="evidence" value="ECO:0007669"/>
    <property type="project" value="UniProtKB-KW"/>
</dbReference>
<dbReference type="GO" id="GO:0008033">
    <property type="term" value="P:tRNA processing"/>
    <property type="evidence" value="ECO:0007669"/>
    <property type="project" value="UniProtKB-UniRule"/>
</dbReference>
<dbReference type="CDD" id="cd02440">
    <property type="entry name" value="AdoMet_MTases"/>
    <property type="match status" value="1"/>
</dbReference>
<dbReference type="Gene3D" id="3.40.50.150">
    <property type="entry name" value="Vaccinia Virus protein VP39"/>
    <property type="match status" value="1"/>
</dbReference>
<dbReference type="HAMAP" id="MF_01872">
    <property type="entry name" value="tRNA_methyltr_YfiC"/>
    <property type="match status" value="1"/>
</dbReference>
<dbReference type="InterPro" id="IPR002052">
    <property type="entry name" value="DNA_methylase_N6_adenine_CS"/>
</dbReference>
<dbReference type="InterPro" id="IPR029063">
    <property type="entry name" value="SAM-dependent_MTases_sf"/>
</dbReference>
<dbReference type="InterPro" id="IPR007848">
    <property type="entry name" value="Small_mtfrase_dom"/>
</dbReference>
<dbReference type="InterPro" id="IPR050210">
    <property type="entry name" value="tRNA_Adenine-N(6)_MTase"/>
</dbReference>
<dbReference type="InterPro" id="IPR022882">
    <property type="entry name" value="tRNA_adenine-N6_MeTrfase"/>
</dbReference>
<dbReference type="PANTHER" id="PTHR47739">
    <property type="entry name" value="TRNA1(VAL) (ADENINE(37)-N6)-METHYLTRANSFERASE"/>
    <property type="match status" value="1"/>
</dbReference>
<dbReference type="PANTHER" id="PTHR47739:SF1">
    <property type="entry name" value="TRNA1(VAL) (ADENINE(37)-N6)-METHYLTRANSFERASE"/>
    <property type="match status" value="1"/>
</dbReference>
<dbReference type="Pfam" id="PF05175">
    <property type="entry name" value="MTS"/>
    <property type="match status" value="1"/>
</dbReference>
<dbReference type="PRINTS" id="PR00507">
    <property type="entry name" value="N12N6MTFRASE"/>
</dbReference>
<dbReference type="SUPFAM" id="SSF53335">
    <property type="entry name" value="S-adenosyl-L-methionine-dependent methyltransferases"/>
    <property type="match status" value="1"/>
</dbReference>
<dbReference type="PROSITE" id="PS00092">
    <property type="entry name" value="N6_MTASE"/>
    <property type="match status" value="1"/>
</dbReference>
<protein>
    <recommendedName>
        <fullName evidence="1">tRNA1(Val) (adenine(37)-N6)-methyltransferase</fullName>
        <ecNumber evidence="1">2.1.1.223</ecNumber>
    </recommendedName>
    <alternativeName>
        <fullName evidence="1">tRNA m6A37 methyltransferase</fullName>
    </alternativeName>
</protein>
<sequence length="235" mass="26917">MFQFKQFSVKQDKTAMKVGTDGVLLGSWAPVFHNPFSILDIGAGTGIIALMLAQRTHAEQIDALEIDEDAYEQAVENFEASPWGDRLFCFHAGLDEFIEEPEDEYDLIVSNPPFYAEDYKTNDEQRDLARFQDAMPFEEIVEAADLLLSENGILAVIIPFKEEAKFTALAKDFELYPIKITRVKGTPKSEIKRSLLAFSRNEVSEIEIDELVIEIDRHIYTPEYIDLTKEFYLKM</sequence>
<accession>A5FKD7</accession>